<gene>
    <name evidence="15" type="primary">RDH16</name>
    <name evidence="11" type="synonym">RODH4</name>
    <name evidence="12" type="synonym">SDR9C8</name>
</gene>
<evidence type="ECO:0000250" key="1"/>
<evidence type="ECO:0000250" key="2">
    <source>
        <dbReference type="UniProtKB" id="O54909"/>
    </source>
</evidence>
<evidence type="ECO:0000255" key="3"/>
<evidence type="ECO:0000255" key="4">
    <source>
        <dbReference type="PROSITE-ProRule" id="PRU10001"/>
    </source>
</evidence>
<evidence type="ECO:0000269" key="5">
    <source>
    </source>
</evidence>
<evidence type="ECO:0000269" key="6">
    <source>
    </source>
</evidence>
<evidence type="ECO:0000269" key="7">
    <source>
    </source>
</evidence>
<evidence type="ECO:0000269" key="8">
    <source>
    </source>
</evidence>
<evidence type="ECO:0000269" key="9">
    <source>
    </source>
</evidence>
<evidence type="ECO:0000303" key="10">
    <source>
    </source>
</evidence>
<evidence type="ECO:0000303" key="11">
    <source>
    </source>
</evidence>
<evidence type="ECO:0000303" key="12">
    <source>
    </source>
</evidence>
<evidence type="ECO:0000305" key="13"/>
<evidence type="ECO:0000305" key="14">
    <source>
    </source>
</evidence>
<evidence type="ECO:0000312" key="15">
    <source>
        <dbReference type="HGNC" id="HGNC:29674"/>
    </source>
</evidence>
<name>RDH16_HUMAN</name>
<organism>
    <name type="scientific">Homo sapiens</name>
    <name type="common">Human</name>
    <dbReference type="NCBI Taxonomy" id="9606"/>
    <lineage>
        <taxon>Eukaryota</taxon>
        <taxon>Metazoa</taxon>
        <taxon>Chordata</taxon>
        <taxon>Craniata</taxon>
        <taxon>Vertebrata</taxon>
        <taxon>Euteleostomi</taxon>
        <taxon>Mammalia</taxon>
        <taxon>Eutheria</taxon>
        <taxon>Euarchontoglires</taxon>
        <taxon>Primates</taxon>
        <taxon>Haplorrhini</taxon>
        <taxon>Catarrhini</taxon>
        <taxon>Hominidae</taxon>
        <taxon>Homo</taxon>
    </lineage>
</organism>
<sequence length="317" mass="35673">MWLYLAVFVGLYYLLHWYRERQVLSHLRDKYVFITGCDSGFGKLLARQLDARGLRVLAACLTEKGAEQLRGQTSDRLETVTLDVTKTESVAAAAQWVKECVRDKGLWGLVNNAGISLPTAPNELLTKQDFVTILDVNLLGVIDVTLSLLPLVRRARGRVVNVSSVMGRVSLFGGGYCISKYGVEAFSDSLRRELSYFGVKVAMIEPGYFKTAVTSKERFLKSFLEIWDRSSPEVKEAYGEKFVADYKKSAEQMEQKCTQDLSLVTNCMEHALIACHPRTRYSAGWDAKLLYLPMSYMPTFLVDAIMYWVSPSPAKAL</sequence>
<keyword id="KW-0256">Endoplasmic reticulum</keyword>
<keyword id="KW-0443">Lipid metabolism</keyword>
<keyword id="KW-0472">Membrane</keyword>
<keyword id="KW-0492">Microsome</keyword>
<keyword id="KW-0520">NAD</keyword>
<keyword id="KW-0560">Oxidoreductase</keyword>
<keyword id="KW-1267">Proteomics identification</keyword>
<keyword id="KW-1185">Reference proteome</keyword>
<keyword id="KW-0753">Steroid metabolism</keyword>
<keyword id="KW-0812">Transmembrane</keyword>
<keyword id="KW-1133">Transmembrane helix</keyword>
<dbReference type="EC" id="1.1.1.105" evidence="5 7 9"/>
<dbReference type="EC" id="1.1.1.209" evidence="7 8 9"/>
<dbReference type="EC" id="1.1.1.315" evidence="2"/>
<dbReference type="EC" id="1.1.1.53" evidence="5 9"/>
<dbReference type="EMBL" id="AF057034">
    <property type="protein sequence ID" value="AAC39922.1"/>
    <property type="molecule type" value="mRNA"/>
</dbReference>
<dbReference type="EMBL" id="AF086735">
    <property type="protein sequence ID" value="AAC72923.1"/>
    <property type="molecule type" value="mRNA"/>
</dbReference>
<dbReference type="CCDS" id="CCDS41797.1"/>
<dbReference type="RefSeq" id="NP_003699.3">
    <property type="nucleotide sequence ID" value="NM_003708.4"/>
</dbReference>
<dbReference type="SMR" id="O75452"/>
<dbReference type="BioGRID" id="114167">
    <property type="interactions" value="1"/>
</dbReference>
<dbReference type="FunCoup" id="O75452">
    <property type="interactions" value="116"/>
</dbReference>
<dbReference type="STRING" id="9606.ENSP00000381206"/>
<dbReference type="SwissLipids" id="SLP:000000801"/>
<dbReference type="iPTMnet" id="O75452"/>
<dbReference type="PhosphoSitePlus" id="O75452"/>
<dbReference type="BioMuta" id="RDH16"/>
<dbReference type="MassIVE" id="O75452"/>
<dbReference type="PaxDb" id="9606-ENSP00000381206"/>
<dbReference type="PeptideAtlas" id="O75452"/>
<dbReference type="ProteomicsDB" id="50019"/>
<dbReference type="Antibodypedia" id="28411">
    <property type="antibodies" value="107 antibodies from 16 providers"/>
</dbReference>
<dbReference type="DNASU" id="8608"/>
<dbReference type="Ensembl" id="ENST00000398138.5">
    <property type="protein sequence ID" value="ENSP00000381206.3"/>
    <property type="gene ID" value="ENSG00000139547.8"/>
</dbReference>
<dbReference type="GeneID" id="8608"/>
<dbReference type="KEGG" id="hsa:8608"/>
<dbReference type="MANE-Select" id="ENST00000398138.5">
    <property type="protein sequence ID" value="ENSP00000381206.3"/>
    <property type="RefSeq nucleotide sequence ID" value="NM_003708.5"/>
    <property type="RefSeq protein sequence ID" value="NP_003699.3"/>
</dbReference>
<dbReference type="UCSC" id="uc001smi.6">
    <property type="organism name" value="human"/>
</dbReference>
<dbReference type="AGR" id="HGNC:29674"/>
<dbReference type="CTD" id="8608"/>
<dbReference type="DisGeNET" id="8608"/>
<dbReference type="GeneCards" id="RDH16"/>
<dbReference type="HGNC" id="HGNC:29674">
    <property type="gene designation" value="RDH16"/>
</dbReference>
<dbReference type="HPA" id="ENSG00000139547">
    <property type="expression patterns" value="Tissue enriched (liver)"/>
</dbReference>
<dbReference type="MIM" id="620043">
    <property type="type" value="gene"/>
</dbReference>
<dbReference type="neXtProt" id="NX_O75452"/>
<dbReference type="OpenTargets" id="ENSG00000139547"/>
<dbReference type="PharmGKB" id="PA142671089"/>
<dbReference type="VEuPathDB" id="HostDB:ENSG00000139547"/>
<dbReference type="eggNOG" id="KOG1610">
    <property type="taxonomic scope" value="Eukaryota"/>
</dbReference>
<dbReference type="GeneTree" id="ENSGT00940000154118"/>
<dbReference type="HOGENOM" id="CLU_010194_2_0_1"/>
<dbReference type="InParanoid" id="O75452"/>
<dbReference type="OMA" id="FRWYQER"/>
<dbReference type="OrthoDB" id="5296at2759"/>
<dbReference type="PAN-GO" id="O75452">
    <property type="GO annotations" value="5 GO annotations based on evolutionary models"/>
</dbReference>
<dbReference type="PhylomeDB" id="O75452"/>
<dbReference type="TreeFam" id="TF325617"/>
<dbReference type="BioCyc" id="MetaCyc:ENSG00000139547-MONOMER"/>
<dbReference type="BRENDA" id="1.1.1.105">
    <property type="organism ID" value="2681"/>
</dbReference>
<dbReference type="PathwayCommons" id="O75452"/>
<dbReference type="Reactome" id="R-HSA-2453902">
    <property type="pathway name" value="The canonical retinoid cycle in rods (twilight vision)"/>
</dbReference>
<dbReference type="Reactome" id="R-HSA-5365859">
    <property type="pathway name" value="RA biosynthesis pathway"/>
</dbReference>
<dbReference type="SABIO-RK" id="O75452"/>
<dbReference type="UniPathway" id="UPA00912"/>
<dbReference type="BioGRID-ORCS" id="8608">
    <property type="hits" value="7 hits in 1146 CRISPR screens"/>
</dbReference>
<dbReference type="ChiTaRS" id="RDH16">
    <property type="organism name" value="human"/>
</dbReference>
<dbReference type="GenomeRNAi" id="8608"/>
<dbReference type="Pharos" id="O75452">
    <property type="development level" value="Tbio"/>
</dbReference>
<dbReference type="PRO" id="PR:O75452"/>
<dbReference type="Proteomes" id="UP000005640">
    <property type="component" value="Chromosome 12"/>
</dbReference>
<dbReference type="RNAct" id="O75452">
    <property type="molecule type" value="protein"/>
</dbReference>
<dbReference type="Bgee" id="ENSG00000139547">
    <property type="expression patterns" value="Expressed in right lobe of liver and 104 other cell types or tissues"/>
</dbReference>
<dbReference type="GO" id="GO:0005789">
    <property type="term" value="C:endoplasmic reticulum membrane"/>
    <property type="evidence" value="ECO:0000250"/>
    <property type="project" value="UniProtKB"/>
</dbReference>
<dbReference type="GO" id="GO:0043231">
    <property type="term" value="C:intracellular membrane-bounded organelle"/>
    <property type="evidence" value="ECO:0000314"/>
    <property type="project" value="UniProtKB"/>
</dbReference>
<dbReference type="GO" id="GO:0106429">
    <property type="term" value="F:11-cis-retinol dehydrogenase"/>
    <property type="evidence" value="ECO:0007669"/>
    <property type="project" value="UniProtKB-EC"/>
</dbReference>
<dbReference type="GO" id="GO:0004745">
    <property type="term" value="F:all-trans-retinol dehydrogenase (NAD+) activity"/>
    <property type="evidence" value="ECO:0000314"/>
    <property type="project" value="UniProtKB"/>
</dbReference>
<dbReference type="GO" id="GO:0047044">
    <property type="term" value="F:androstan-3-alpha,17-beta-diol dehydrogenase (NAD+) activity"/>
    <property type="evidence" value="ECO:0000314"/>
    <property type="project" value="UniProtKB"/>
</dbReference>
<dbReference type="GO" id="GO:0047023">
    <property type="term" value="F:androsterone dehydrogenase [NAD(P)+] activity"/>
    <property type="evidence" value="ECO:0000314"/>
    <property type="project" value="UniProtKB"/>
</dbReference>
<dbReference type="GO" id="GO:0009055">
    <property type="term" value="F:electron transfer activity"/>
    <property type="evidence" value="ECO:0000304"/>
    <property type="project" value="UniProtKB"/>
</dbReference>
<dbReference type="GO" id="GO:0042802">
    <property type="term" value="F:identical protein binding"/>
    <property type="evidence" value="ECO:0000250"/>
    <property type="project" value="UniProtKB"/>
</dbReference>
<dbReference type="GO" id="GO:0006629">
    <property type="term" value="P:lipid metabolic process"/>
    <property type="evidence" value="ECO:0000304"/>
    <property type="project" value="ProtInc"/>
</dbReference>
<dbReference type="GO" id="GO:0042572">
    <property type="term" value="P:retinol metabolic process"/>
    <property type="evidence" value="ECO:0000318"/>
    <property type="project" value="GO_Central"/>
</dbReference>
<dbReference type="GO" id="GO:0008202">
    <property type="term" value="P:steroid metabolic process"/>
    <property type="evidence" value="ECO:0000314"/>
    <property type="project" value="UniProtKB"/>
</dbReference>
<dbReference type="FunFam" id="3.40.50.720:FF:000074">
    <property type="entry name" value="Retinol dehydrogenase type 1"/>
    <property type="match status" value="1"/>
</dbReference>
<dbReference type="Gene3D" id="3.40.50.720">
    <property type="entry name" value="NAD(P)-binding Rossmann-like Domain"/>
    <property type="match status" value="1"/>
</dbReference>
<dbReference type="InterPro" id="IPR036291">
    <property type="entry name" value="NAD(P)-bd_dom_sf"/>
</dbReference>
<dbReference type="InterPro" id="IPR020904">
    <property type="entry name" value="Sc_DH/Rdtase_CS"/>
</dbReference>
<dbReference type="InterPro" id="IPR002347">
    <property type="entry name" value="SDR_fam"/>
</dbReference>
<dbReference type="PANTHER" id="PTHR43313:SF11">
    <property type="entry name" value="RETINOL DEHYDROGENASE 16"/>
    <property type="match status" value="1"/>
</dbReference>
<dbReference type="PANTHER" id="PTHR43313">
    <property type="entry name" value="SHORT-CHAIN DEHYDROGENASE/REDUCTASE FAMILY 9C"/>
    <property type="match status" value="1"/>
</dbReference>
<dbReference type="Pfam" id="PF00106">
    <property type="entry name" value="adh_short"/>
    <property type="match status" value="1"/>
</dbReference>
<dbReference type="PRINTS" id="PR00081">
    <property type="entry name" value="GDHRDH"/>
</dbReference>
<dbReference type="PRINTS" id="PR00080">
    <property type="entry name" value="SDRFAMILY"/>
</dbReference>
<dbReference type="SUPFAM" id="SSF51735">
    <property type="entry name" value="NAD(P)-binding Rossmann-fold domains"/>
    <property type="match status" value="1"/>
</dbReference>
<dbReference type="PROSITE" id="PS00061">
    <property type="entry name" value="ADH_SHORT"/>
    <property type="match status" value="1"/>
</dbReference>
<accession>O75452</accession>
<accession>Q9UNV2</accession>
<reference key="1">
    <citation type="journal article" date="1998" name="J. Biol. Chem.">
        <title>cDNA cloning and characterization of a new human microsomal NAD+-dependent dehydrogenase that oxidizes all-trans-retinol and 3alpha-hydroxysteroids.</title>
        <authorList>
            <person name="Gough W.H."/>
            <person name="VanOoteghem S."/>
            <person name="Sint T."/>
            <person name="Kedishvili N.Y."/>
        </authorList>
    </citation>
    <scope>NUCLEOTIDE SEQUENCE [MRNA]</scope>
    <scope>FUNCTION</scope>
    <scope>BIOPHYSICOCHEMICAL PROPERTIES</scope>
    <scope>ACTIVITY REGULATION</scope>
    <scope>SUBCELLULAR LOCATION</scope>
    <scope>TISSUE SPECIFICITY</scope>
    <scope>CATALYTIC ACTIVITY</scope>
    <source>
        <tissue>Liver</tissue>
    </source>
</reference>
<reference key="2">
    <citation type="journal article" date="1999" name="Mol. Genet. Metab.">
        <title>Cloning and characterization of retinol dehydrogenase transcripts expressed in human epidermal keratinocytes.</title>
        <authorList>
            <person name="Jurukovski V."/>
            <person name="Markova N.G."/>
            <person name="Karaman-Jurukovska N."/>
            <person name="Randolph R.K."/>
            <person name="Su J."/>
            <person name="Napoli J.L."/>
            <person name="Simon M."/>
        </authorList>
    </citation>
    <scope>NUCLEOTIDE SEQUENCE [MRNA]</scope>
    <scope>FUNCTION</scope>
    <scope>INDUCTION</scope>
    <scope>TISSUE SPECIFICITY</scope>
    <scope>CATALYTIC ACTIVITY</scope>
    <source>
        <tissue>Keratinocyte</tissue>
    </source>
</reference>
<reference key="3">
    <citation type="journal article" date="2002" name="Am. J. Obstet. Gynecol.">
        <title>Expression of a retinol dehydrogenase (hRoDH-4), a member of the retinol/steroid dehydrogenase family implicated in retinoic acid biosynthesis, in normal and neoplastic endometria.</title>
        <authorList>
            <person name="Cain J.M."/>
            <person name="Zaino R."/>
            <person name="Shearer D."/>
            <person name="Bennett R.A."/>
            <person name="Olt G."/>
            <person name="Weisz J."/>
        </authorList>
    </citation>
    <scope>TISSUE SPECIFICITY</scope>
</reference>
<reference key="4">
    <citation type="journal article" date="2003" name="Biochemistry">
        <title>Differential recognition of the free versus bound retinol by human microsomal retinol/sterol dehydrogenases: characterization of the holo-CRBP dehydrogenase activity of RoDH-4.</title>
        <authorList>
            <person name="Lapshina E.A."/>
            <person name="Belyaeva O.V."/>
            <person name="Chumakova O.V."/>
            <person name="Kedishvili N.Y."/>
        </authorList>
    </citation>
    <scope>FUNCTION</scope>
    <scope>LACK OF GLYCOSYLATION</scope>
    <scope>SUBCELLULAR LOCATION</scope>
    <scope>TOPOLOGY</scope>
    <scope>CATALYTIC ACTIVITY</scope>
    <scope>CAUTION</scope>
</reference>
<reference key="5">
    <citation type="journal article" date="2009" name="Chem. Biol. Interact.">
        <title>The SDR (short-chain dehydrogenase/reductase and related enzymes) nomenclature initiative.</title>
        <authorList>
            <person name="Persson B."/>
            <person name="Kallberg Y."/>
            <person name="Bray J.E."/>
            <person name="Bruford E."/>
            <person name="Dellaporta S.L."/>
            <person name="Favia A.D."/>
            <person name="Duarte R.G."/>
            <person name="Joernvall H."/>
            <person name="Kavanagh K.L."/>
            <person name="Kedishvili N."/>
            <person name="Kisiela M."/>
            <person name="Maser E."/>
            <person name="Mindnich R."/>
            <person name="Orchard S."/>
            <person name="Penning T.M."/>
            <person name="Thornton J.M."/>
            <person name="Adamski J."/>
            <person name="Oppermann U."/>
        </authorList>
    </citation>
    <scope>GENE FAMILY</scope>
    <scope>NOMENCLATURE</scope>
</reference>
<reference key="6">
    <citation type="journal article" date="2014" name="J. Proteomics">
        <title>An enzyme assisted RP-RPLC approach for in-depth analysis of human liver phosphoproteome.</title>
        <authorList>
            <person name="Bian Y."/>
            <person name="Song C."/>
            <person name="Cheng K."/>
            <person name="Dong M."/>
            <person name="Wang F."/>
            <person name="Huang J."/>
            <person name="Sun D."/>
            <person name="Wang L."/>
            <person name="Ye M."/>
            <person name="Zou H."/>
        </authorList>
    </citation>
    <scope>IDENTIFICATION BY MASS SPECTROMETRY [LARGE SCALE ANALYSIS]</scope>
    <source>
        <tissue>Liver</tissue>
    </source>
</reference>
<reference key="7">
    <citation type="journal article" date="2018" name="Oncotarget">
        <title>Inhibition of dihydrotestosterone synthesis in prostate cancer by combined frontdoor and backdoor pathway blockade.</title>
        <authorList>
            <person name="Fiandalo M.V."/>
            <person name="Stocking J.J."/>
            <person name="Pop E.A."/>
            <person name="Wilton J.H."/>
            <person name="Mantione K.M."/>
            <person name="Li Y."/>
            <person name="Attwood K.M."/>
            <person name="Azabdaftari G."/>
            <person name="Wu Y."/>
            <person name="Watt D.S."/>
            <person name="Wilson E.M."/>
            <person name="Mohler J.L."/>
        </authorList>
    </citation>
    <scope>MUTAGENESIS OF TYR-176 AND LYS-180</scope>
    <scope>FUNCTION</scope>
    <scope>CATALYTIC ACTIVITY</scope>
</reference>
<comment type="function">
    <text evidence="5 7 8 9">Oxidoreductase with a preference for NAD. Oxidizes all-trans-retinol, 9-cis-retinol, 11-cis-retinol and 13-cis-retinol to the corresponding aldehydes (PubMed:10329026, PubMed:12534290, PubMed:9677409). Has higher activity towards CRBP-bound retinol than with free retinol (PubMed:12534290). Also oxidizes 3-alpha-hydroxysteroids. Oxidizes androstanediol and androsterone to dihydrotestosterone and androstanedione. Can also catalyze the reverse reaction (PubMed:10329026, PubMed:29541409, PubMed:9677409).</text>
</comment>
<comment type="catalytic activity">
    <reaction evidence="5 7 9">
        <text>all-trans-retinol--[retinol-binding protein] + NAD(+) = all-trans-retinal--[retinol-binding protein] + NADH + H(+)</text>
        <dbReference type="Rhea" id="RHEA:48488"/>
        <dbReference type="Rhea" id="RHEA-COMP:14428"/>
        <dbReference type="Rhea" id="RHEA-COMP:14430"/>
        <dbReference type="ChEBI" id="CHEBI:15378"/>
        <dbReference type="ChEBI" id="CHEBI:17336"/>
        <dbReference type="ChEBI" id="CHEBI:17898"/>
        <dbReference type="ChEBI" id="CHEBI:57540"/>
        <dbReference type="ChEBI" id="CHEBI:57945"/>
        <dbReference type="ChEBI" id="CHEBI:83228"/>
        <dbReference type="EC" id="1.1.1.105"/>
    </reaction>
</comment>
<comment type="catalytic activity">
    <reaction evidence="5 9">
        <text>all-trans-retinol + NAD(+) = all-trans-retinal + NADH + H(+)</text>
        <dbReference type="Rhea" id="RHEA:21284"/>
        <dbReference type="ChEBI" id="CHEBI:15378"/>
        <dbReference type="ChEBI" id="CHEBI:17336"/>
        <dbReference type="ChEBI" id="CHEBI:17898"/>
        <dbReference type="ChEBI" id="CHEBI:57540"/>
        <dbReference type="ChEBI" id="CHEBI:57945"/>
        <dbReference type="EC" id="1.1.1.105"/>
    </reaction>
</comment>
<comment type="catalytic activity">
    <reaction evidence="9">
        <text>13-cis-retinol + NAD(+) = 13-cis-retinal + NADH + H(+)</text>
        <dbReference type="Rhea" id="RHEA:42056"/>
        <dbReference type="ChEBI" id="CHEBI:15378"/>
        <dbReference type="ChEBI" id="CHEBI:45479"/>
        <dbReference type="ChEBI" id="CHEBI:45487"/>
        <dbReference type="ChEBI" id="CHEBI:57540"/>
        <dbReference type="ChEBI" id="CHEBI:57945"/>
    </reaction>
</comment>
<comment type="catalytic activity">
    <reaction evidence="2">
        <text>11-cis-retinol + NAD(+) = 11-cis-retinal + NADH + H(+)</text>
        <dbReference type="Rhea" id="RHEA:42060"/>
        <dbReference type="ChEBI" id="CHEBI:15378"/>
        <dbReference type="ChEBI" id="CHEBI:16066"/>
        <dbReference type="ChEBI" id="CHEBI:16302"/>
        <dbReference type="ChEBI" id="CHEBI:57540"/>
        <dbReference type="ChEBI" id="CHEBI:57945"/>
        <dbReference type="EC" id="1.1.1.315"/>
    </reaction>
</comment>
<comment type="catalytic activity">
    <reaction evidence="2">
        <text>9-cis-retinol + NAD(+) = 9-cis-retinal + NADH + H(+)</text>
        <dbReference type="Rhea" id="RHEA:42052"/>
        <dbReference type="ChEBI" id="CHEBI:15378"/>
        <dbReference type="ChEBI" id="CHEBI:57540"/>
        <dbReference type="ChEBI" id="CHEBI:57945"/>
        <dbReference type="ChEBI" id="CHEBI:78272"/>
        <dbReference type="ChEBI" id="CHEBI:78273"/>
    </reaction>
</comment>
<comment type="catalytic activity">
    <reaction evidence="5 9">
        <text>5alpha-androstane-3alpha,17beta-diol + NAD(+) = 17beta-hydroxy-5alpha-androstan-3-one + NADH + H(+)</text>
        <dbReference type="Rhea" id="RHEA:42004"/>
        <dbReference type="ChEBI" id="CHEBI:15378"/>
        <dbReference type="ChEBI" id="CHEBI:16330"/>
        <dbReference type="ChEBI" id="CHEBI:36713"/>
        <dbReference type="ChEBI" id="CHEBI:57540"/>
        <dbReference type="ChEBI" id="CHEBI:57945"/>
        <dbReference type="EC" id="1.1.1.53"/>
    </reaction>
</comment>
<comment type="catalytic activity">
    <reaction evidence="7 8 9">
        <text>androsterone + NAD(+) = 5alpha-androstan-3,17-dione + NADH + H(+)</text>
        <dbReference type="Rhea" id="RHEA:20381"/>
        <dbReference type="ChEBI" id="CHEBI:15378"/>
        <dbReference type="ChEBI" id="CHEBI:15994"/>
        <dbReference type="ChEBI" id="CHEBI:16032"/>
        <dbReference type="ChEBI" id="CHEBI:57540"/>
        <dbReference type="ChEBI" id="CHEBI:57945"/>
        <dbReference type="EC" id="1.1.1.209"/>
    </reaction>
</comment>
<comment type="activity regulation">
    <text evidence="9">Inhibited by citral, perillyl alcohol, geraniol, farnesol and geranyl geraniol.</text>
</comment>
<comment type="biophysicochemical properties">
    <kinetics>
        <KM evidence="7 9">0.14 uM for 3alpha-hydroxy-5alpha-androstan-17-one (androsterone)</KM>
        <KM evidence="9">0.22 uM for 5alpha-androstane-3,17-dione (androstanediol)</KM>
        <KM evidence="9">0.8 uM for 17beta-hydroxy-5alpha-androstan-3-one (dihydrotestosterone)</KM>
        <KM evidence="9">0.13 uM for NAD</KM>
        <KM evidence="9">190 uM for NADP</KM>
        <KM evidence="9">5.8 uM for all-trans-retinol</KM>
        <KM evidence="9">3.5 uM for 13-cis-retinol</KM>
        <KM evidence="9">3.6 uM for CRBP-all-trans-retinol</KM>
    </kinetics>
</comment>
<comment type="pathway">
    <text evidence="5 9">Cofactor metabolism; retinol metabolism.</text>
</comment>
<comment type="subunit">
    <text evidence="2">Homodimer.</text>
</comment>
<comment type="subcellular location">
    <subcellularLocation>
        <location evidence="9">Microsome membrane</location>
    </subcellularLocation>
    <subcellularLocation>
        <location evidence="2">Endoplasmic reticulum membrane</location>
        <topology evidence="13">Single-pass membrane protein</topology>
    </subcellularLocation>
</comment>
<comment type="tissue specificity">
    <text evidence="5 6 9">Highly expressed in adult liver (at protein level) (PubMed:9677409). Detected in endometrium, liver and foreskin (PubMed:10329026, PubMed:11967490). Detected in the spineous layers of adult skin, and at lower levels in basal and granular skin layers (PubMed:10329026). Detected in fetal liver and lung.</text>
</comment>
<comment type="induction">
    <text evidence="5">Transiently up-regulated by retinoic acid.</text>
</comment>
<comment type="domain">
    <text evidence="2">The C-terminal region plays a crucial role in controlling the activity of RDH16 and its required for endoplasmic reticulum (ER) retention.</text>
</comment>
<comment type="PTM">
    <text evidence="7">Not N-glycosylated.</text>
</comment>
<comment type="similarity">
    <text evidence="13">Belongs to the short-chain dehydrogenases/reductases (SDR) family.</text>
</comment>
<comment type="caution">
    <text evidence="2 7 13">Membrane topology is controversial (PubMed:12534290). Membrane topology structure with endoplasmic reticulum lumen orientation of the catalytic domains while the C-terminus is in the cytosol have been suggested (By similarity). Others investigators have argued for a reverse orientation, with a membrane-embedded N-terminal domain but no C-terminal transmembrane segment, and a cytosolic orientation of the catalytic domain (PubMed:12534290). These contradictory results are probably because of differences in the assay systems.</text>
</comment>
<proteinExistence type="evidence at protein level"/>
<protein>
    <recommendedName>
        <fullName>Retinol dehydrogenase 16</fullName>
        <ecNumber evidence="5 7 9">1.1.1.105</ecNumber>
        <ecNumber evidence="7 8 9">1.1.1.209</ecNumber>
        <ecNumber evidence="2">1.1.1.315</ecNumber>
        <ecNumber evidence="5 9">1.1.1.53</ecNumber>
    </recommendedName>
    <alternativeName>
        <fullName evidence="10">Human epidermal retinol dehydrogenase</fullName>
        <shortName evidence="10">hRDH-E</shortName>
    </alternativeName>
    <alternativeName>
        <fullName evidence="11">Microsomal NAD(+)-dependent retinol dehydrogenase 4</fullName>
        <shortName evidence="11">RoDH-4</shortName>
    </alternativeName>
    <alternativeName>
        <fullName evidence="12">Short chain dehydrogenase/reductase family 9C member 8</fullName>
    </alternativeName>
    <alternativeName>
        <fullName>Sterol/retinol dehydrogenase</fullName>
    </alternativeName>
</protein>
<feature type="chain" id="PRO_0000307693" description="Retinol dehydrogenase 16">
    <location>
        <begin position="1"/>
        <end position="317"/>
    </location>
</feature>
<feature type="transmembrane region" description="Helical" evidence="3">
    <location>
        <begin position="289"/>
        <end position="309"/>
    </location>
</feature>
<feature type="active site" description="Proton acceptor" evidence="4 14">
    <location>
        <position position="176"/>
    </location>
</feature>
<feature type="binding site" evidence="1">
    <location>
        <begin position="33"/>
        <end position="57"/>
    </location>
    <ligand>
        <name>NAD(+)</name>
        <dbReference type="ChEBI" id="CHEBI:57540"/>
    </ligand>
</feature>
<feature type="binding site" evidence="1">
    <location>
        <position position="164"/>
    </location>
    <ligand>
        <name>substrate</name>
    </ligand>
</feature>
<feature type="mutagenesis site" description="Decreases androsterone dehydrogenase activity; when associated with R-180." evidence="8">
    <original>Y</original>
    <variation>F</variation>
    <location>
        <position position="176"/>
    </location>
</feature>
<feature type="mutagenesis site" description="Decreases androsterone dehydrogenase activity; when associated with F-176." evidence="8">
    <original>K</original>
    <variation>R</variation>
    <location>
        <position position="180"/>
    </location>
</feature>
<feature type="sequence conflict" description="In Ref. 2; AAC72923." evidence="13" ref="2">
    <original>FV</original>
    <variation>LL</variation>
    <location>
        <begin position="130"/>
        <end position="131"/>
    </location>
</feature>
<feature type="sequence conflict" description="In Ref. 2; AAC72923." evidence="13" ref="2">
    <original>S</original>
    <variation>N</variation>
    <location>
        <position position="147"/>
    </location>
</feature>
<feature type="sequence conflict" description="In Ref. 1; AAC39922." evidence="13" ref="1">
    <original>R</original>
    <variation>K</variation>
    <location>
        <position position="154"/>
    </location>
</feature>
<feature type="sequence conflict" description="In Ref. 2; AAC72923." evidence="13" ref="2">
    <original>S</original>
    <variation>F</variation>
    <location>
        <position position="163"/>
    </location>
</feature>